<keyword id="KW-0539">Nucleus</keyword>
<keyword id="KW-1185">Reference proteome</keyword>
<keyword id="KW-0804">Transcription</keyword>
<keyword id="KW-0805">Transcription regulation</keyword>
<proteinExistence type="evidence at transcript level"/>
<gene>
    <name evidence="3" type="primary">dbaG</name>
    <name type="ORF">ANIA_07901</name>
</gene>
<organism>
    <name type="scientific">Emericella nidulans (strain FGSC A4 / ATCC 38163 / CBS 112.46 / NRRL 194 / M139)</name>
    <name type="common">Aspergillus nidulans</name>
    <dbReference type="NCBI Taxonomy" id="227321"/>
    <lineage>
        <taxon>Eukaryota</taxon>
        <taxon>Fungi</taxon>
        <taxon>Dikarya</taxon>
        <taxon>Ascomycota</taxon>
        <taxon>Pezizomycotina</taxon>
        <taxon>Eurotiomycetes</taxon>
        <taxon>Eurotiomycetidae</taxon>
        <taxon>Eurotiales</taxon>
        <taxon>Aspergillaceae</taxon>
        <taxon>Aspergillus</taxon>
        <taxon>Aspergillus subgen. Nidulantes</taxon>
    </lineage>
</organism>
<feature type="chain" id="PRO_0000446357" description="Transcription factor dbaG">
    <location>
        <begin position="1"/>
        <end position="420"/>
    </location>
</feature>
<evidence type="ECO:0000269" key="1">
    <source>
    </source>
</evidence>
<evidence type="ECO:0000269" key="2">
    <source>
    </source>
</evidence>
<evidence type="ECO:0000303" key="3">
    <source>
    </source>
</evidence>
<evidence type="ECO:0000305" key="4"/>
<name>DBAG_EMENI</name>
<accession>Q5AUX9</accession>
<accession>A0A1U8QRB0</accession>
<accession>C8V4K1</accession>
<protein>
    <recommendedName>
        <fullName evidence="3">Transcription factor dbaG</fullName>
    </recommendedName>
    <alternativeName>
        <fullName evidence="3">Derivative of benzaldehyde biosynthesis cluster protein G</fullName>
    </alternativeName>
</protein>
<reference key="1">
    <citation type="journal article" date="2005" name="Nature">
        <title>Sequencing of Aspergillus nidulans and comparative analysis with A. fumigatus and A. oryzae.</title>
        <authorList>
            <person name="Galagan J.E."/>
            <person name="Calvo S.E."/>
            <person name="Cuomo C."/>
            <person name="Ma L.-J."/>
            <person name="Wortman J.R."/>
            <person name="Batzoglou S."/>
            <person name="Lee S.-I."/>
            <person name="Bastuerkmen M."/>
            <person name="Spevak C.C."/>
            <person name="Clutterbuck J."/>
            <person name="Kapitonov V."/>
            <person name="Jurka J."/>
            <person name="Scazzocchio C."/>
            <person name="Farman M.L."/>
            <person name="Butler J."/>
            <person name="Purcell S."/>
            <person name="Harris S."/>
            <person name="Braus G.H."/>
            <person name="Draht O."/>
            <person name="Busch S."/>
            <person name="D'Enfert C."/>
            <person name="Bouchier C."/>
            <person name="Goldman G.H."/>
            <person name="Bell-Pedersen D."/>
            <person name="Griffiths-Jones S."/>
            <person name="Doonan J.H."/>
            <person name="Yu J."/>
            <person name="Vienken K."/>
            <person name="Pain A."/>
            <person name="Freitag M."/>
            <person name="Selker E.U."/>
            <person name="Archer D.B."/>
            <person name="Penalva M.A."/>
            <person name="Oakley B.R."/>
            <person name="Momany M."/>
            <person name="Tanaka T."/>
            <person name="Kumagai T."/>
            <person name="Asai K."/>
            <person name="Machida M."/>
            <person name="Nierman W.C."/>
            <person name="Denning D.W."/>
            <person name="Caddick M.X."/>
            <person name="Hynes M."/>
            <person name="Paoletti M."/>
            <person name="Fischer R."/>
            <person name="Miller B.L."/>
            <person name="Dyer P.S."/>
            <person name="Sachs M.S."/>
            <person name="Osmani S.A."/>
            <person name="Birren B.W."/>
        </authorList>
    </citation>
    <scope>NUCLEOTIDE SEQUENCE [LARGE SCALE GENOMIC DNA]</scope>
    <source>
        <strain>FGSC A4 / ATCC 38163 / CBS 112.46 / NRRL 194 / M139</strain>
    </source>
</reference>
<reference key="2">
    <citation type="journal article" date="2009" name="Fungal Genet. Biol.">
        <title>The 2008 update of the Aspergillus nidulans genome annotation: a community effort.</title>
        <authorList>
            <person name="Wortman J.R."/>
            <person name="Gilsenan J.M."/>
            <person name="Joardar V."/>
            <person name="Deegan J."/>
            <person name="Clutterbuck J."/>
            <person name="Andersen M.R."/>
            <person name="Archer D."/>
            <person name="Bencina M."/>
            <person name="Braus G."/>
            <person name="Coutinho P."/>
            <person name="von Dohren H."/>
            <person name="Doonan J."/>
            <person name="Driessen A.J."/>
            <person name="Durek P."/>
            <person name="Espeso E."/>
            <person name="Fekete E."/>
            <person name="Flipphi M."/>
            <person name="Estrada C.G."/>
            <person name="Geysens S."/>
            <person name="Goldman G."/>
            <person name="de Groot P.W."/>
            <person name="Hansen K."/>
            <person name="Harris S.D."/>
            <person name="Heinekamp T."/>
            <person name="Helmstaedt K."/>
            <person name="Henrissat B."/>
            <person name="Hofmann G."/>
            <person name="Homan T."/>
            <person name="Horio T."/>
            <person name="Horiuchi H."/>
            <person name="James S."/>
            <person name="Jones M."/>
            <person name="Karaffa L."/>
            <person name="Karanyi Z."/>
            <person name="Kato M."/>
            <person name="Keller N."/>
            <person name="Kelly D.E."/>
            <person name="Kiel J.A."/>
            <person name="Kim J.M."/>
            <person name="van der Klei I.J."/>
            <person name="Klis F.M."/>
            <person name="Kovalchuk A."/>
            <person name="Krasevec N."/>
            <person name="Kubicek C.P."/>
            <person name="Liu B."/>
            <person name="Maccabe A."/>
            <person name="Meyer V."/>
            <person name="Mirabito P."/>
            <person name="Miskei M."/>
            <person name="Mos M."/>
            <person name="Mullins J."/>
            <person name="Nelson D.R."/>
            <person name="Nielsen J."/>
            <person name="Oakley B.R."/>
            <person name="Osmani S.A."/>
            <person name="Pakula T."/>
            <person name="Paszewski A."/>
            <person name="Paulsen I."/>
            <person name="Pilsyk S."/>
            <person name="Pocsi I."/>
            <person name="Punt P.J."/>
            <person name="Ram A.F."/>
            <person name="Ren Q."/>
            <person name="Robellet X."/>
            <person name="Robson G."/>
            <person name="Seiboth B."/>
            <person name="van Solingen P."/>
            <person name="Specht T."/>
            <person name="Sun J."/>
            <person name="Taheri-Talesh N."/>
            <person name="Takeshita N."/>
            <person name="Ussery D."/>
            <person name="vanKuyk P.A."/>
            <person name="Visser H."/>
            <person name="van de Vondervoort P.J."/>
            <person name="de Vries R.P."/>
            <person name="Walton J."/>
            <person name="Xiang X."/>
            <person name="Xiong Y."/>
            <person name="Zeng A.P."/>
            <person name="Brandt B.W."/>
            <person name="Cornell M.J."/>
            <person name="van den Hondel C.A."/>
            <person name="Visser J."/>
            <person name="Oliver S.G."/>
            <person name="Turner G."/>
        </authorList>
    </citation>
    <scope>GENOME REANNOTATION</scope>
    <source>
        <strain>FGSC A4 / ATCC 38163 / CBS 112.46 / NRRL 194 / M139</strain>
    </source>
</reference>
<reference key="3">
    <citation type="journal article" date="2012" name="Appl. Environ. Microbiol.">
        <title>Breaking the silence: protein stabilization uncovers silenced biosynthetic gene clusters in the fungus Aspergillus nidulans.</title>
        <authorList>
            <person name="Gerke J."/>
            <person name="Bayram O."/>
            <person name="Feussner K."/>
            <person name="Landesfeind M."/>
            <person name="Shelest E."/>
            <person name="Feussner I."/>
            <person name="Braus G.H."/>
        </authorList>
    </citation>
    <scope>IDENTIFICATION</scope>
    <scope>INDUCTION</scope>
    <scope>FUNCTION</scope>
    <scope>DISRUPTION PHENOTYPE</scope>
</reference>
<reference key="4">
    <citation type="journal article" date="2015" name="Genetics">
        <title>Beyond asexual development: modifications in the gene expression profile caused by the absence of the Aspergillus nidulans transcription factor FlbB.</title>
        <authorList>
            <person name="Oiartzabal-Arano E."/>
            <person name="Garzia A."/>
            <person name="Gorostidi A."/>
            <person name="Ugalde U."/>
            <person name="Espeso E.A."/>
            <person name="Etxebeste O."/>
        </authorList>
    </citation>
    <scope>INDUCTION</scope>
</reference>
<comment type="function">
    <text evidence="1">Transcription factor that coregulates the expression of the gene cluster that mediates the biosynthesis of the antibiotic 2,4- dihydroxy-3-methyl-6-(2-oxopropyl)benzaldehyde (DHMBA) and its derivatives (PubMed:23001671). Specifically positively regulates the expression of the FAD-dependent oxidoreductase dbaF (PubMed:23001671).</text>
</comment>
<comment type="subcellular location">
    <subcellularLocation>
        <location evidence="4">Nucleus</location>
    </subcellularLocation>
</comment>
<comment type="induction">
    <text evidence="1 2">Deletion of the conserved eukaryotic csnE deneddylase subunit of the COP9 signalosome leading to defect in protein degradation results in the activation of the silenced dba gene cluster (PubMed:23001671). Expression is positively regulated by the dba cluster specific transcription factor dbaA (PubMed:23001671). Expression is also controlled by the transcription factor flbB (PubMed:25701285).</text>
</comment>
<comment type="disruption phenotype">
    <text evidence="1">Reduces the amounts of DHMBA produced and strongly reduces the production of yellow pigmentation.</text>
</comment>
<sequence length="420" mass="45630">MPEDGPPKDIPDGLIEELALRAFFHDYCVVPVNTALSRGYLGGLEPMVHRLGLQSPVANACKAVAFASHGLKLSRPFLTKKGEILYHELLGSLARSIQNPALGAGPDIVVTAVLLGLYEMIMAGESNPGHHNAHAGGMAAILQIENSPLGLLQAARAGHPLVLNRMVQNNGMFISPSPGGGGQSLDTILVKLGSLWQKSETLLSNPQIPLFFDELYALREETTALNRDLILWQKAQSDNFKPTKVGYLSPSPYQLSPSAGFWPGQVDTYVDLYVAGVWNVSRVARCFLINLIVRLSNILDPTSDHRQYHNDVRELVGDIFASIPFHLTEDLGAFVAKRGANPEIANPGRPVGGLILLHPVYIASQLPVVPPDMQEYMRKCLAWIGKYMGIGQACLLAKAPRVEGQYFACGCMLVWAGLLI</sequence>
<dbReference type="EMBL" id="AACD01000135">
    <property type="protein sequence ID" value="EAA59555.1"/>
    <property type="molecule type" value="Genomic_DNA"/>
</dbReference>
<dbReference type="EMBL" id="BN001302">
    <property type="protein sequence ID" value="CBF73490.1"/>
    <property type="molecule type" value="Genomic_DNA"/>
</dbReference>
<dbReference type="RefSeq" id="XP_681170.1">
    <property type="nucleotide sequence ID" value="XM_676078.1"/>
</dbReference>
<dbReference type="SMR" id="Q5AUX9"/>
<dbReference type="STRING" id="227321.Q5AUX9"/>
<dbReference type="EnsemblFungi" id="CBF73490">
    <property type="protein sequence ID" value="CBF73490"/>
    <property type="gene ID" value="ANIA_07901"/>
</dbReference>
<dbReference type="GeneID" id="2868979"/>
<dbReference type="KEGG" id="ani:ANIA_07901"/>
<dbReference type="eggNOG" id="ENOG502S3ED">
    <property type="taxonomic scope" value="Eukaryota"/>
</dbReference>
<dbReference type="HOGENOM" id="CLU_013866_1_1_1"/>
<dbReference type="InParanoid" id="Q5AUX9"/>
<dbReference type="OMA" id="RAFFHDY"/>
<dbReference type="OrthoDB" id="3525185at2759"/>
<dbReference type="Proteomes" id="UP000000560">
    <property type="component" value="Chromosome II"/>
</dbReference>
<dbReference type="GO" id="GO:0005634">
    <property type="term" value="C:nucleus"/>
    <property type="evidence" value="ECO:0007669"/>
    <property type="project" value="UniProtKB-SubCell"/>
</dbReference>
<dbReference type="InterPro" id="IPR053175">
    <property type="entry name" value="DHMBA_Reg_Transcription_Factor"/>
</dbReference>
<dbReference type="PANTHER" id="PTHR38791:SF5">
    <property type="entry name" value="TRANSCRIPTION FACTOR DBAG-RELATED"/>
    <property type="match status" value="1"/>
</dbReference>
<dbReference type="PANTHER" id="PTHR38791">
    <property type="entry name" value="ZN(II)2CYS6 TRANSCRIPTION FACTOR (EUROFUNG)-RELATED-RELATED"/>
    <property type="match status" value="1"/>
</dbReference>